<evidence type="ECO:0000255" key="1">
    <source>
        <dbReference type="HAMAP-Rule" id="MF_01855"/>
    </source>
</evidence>
<feature type="chain" id="PRO_0000364663" description="Fructose-1,6-bisphosphatase class 1 2">
    <location>
        <begin position="1"/>
        <end position="365"/>
    </location>
</feature>
<feature type="binding site" evidence="1">
    <location>
        <position position="100"/>
    </location>
    <ligand>
        <name>Mg(2+)</name>
        <dbReference type="ChEBI" id="CHEBI:18420"/>
        <label>1</label>
    </ligand>
</feature>
<feature type="binding site" evidence="1">
    <location>
        <position position="122"/>
    </location>
    <ligand>
        <name>Mg(2+)</name>
        <dbReference type="ChEBI" id="CHEBI:18420"/>
        <label>1</label>
    </ligand>
</feature>
<feature type="binding site" evidence="1">
    <location>
        <position position="122"/>
    </location>
    <ligand>
        <name>Mg(2+)</name>
        <dbReference type="ChEBI" id="CHEBI:18420"/>
        <label>2</label>
    </ligand>
</feature>
<feature type="binding site" evidence="1">
    <location>
        <position position="124"/>
    </location>
    <ligand>
        <name>Mg(2+)</name>
        <dbReference type="ChEBI" id="CHEBI:18420"/>
        <label>1</label>
    </ligand>
</feature>
<feature type="binding site" evidence="1">
    <location>
        <begin position="125"/>
        <end position="128"/>
    </location>
    <ligand>
        <name>substrate</name>
    </ligand>
</feature>
<feature type="binding site" evidence="1">
    <location>
        <position position="125"/>
    </location>
    <ligand>
        <name>Mg(2+)</name>
        <dbReference type="ChEBI" id="CHEBI:18420"/>
        <label>2</label>
    </ligand>
</feature>
<feature type="binding site" evidence="1">
    <location>
        <position position="221"/>
    </location>
    <ligand>
        <name>substrate</name>
    </ligand>
</feature>
<feature type="binding site" evidence="1">
    <location>
        <position position="293"/>
    </location>
    <ligand>
        <name>Mg(2+)</name>
        <dbReference type="ChEBI" id="CHEBI:18420"/>
        <label>2</label>
    </ligand>
</feature>
<sequence length="365" mass="39933">MPLSHRQTLTRYLIEERRRFPEASGELNALILDVALACKALARVVSFGELGDALSDGSAAPTGGGINVQGEVQKPLDVQSNEMFIRMNEWNGQLAGMASEEMEEPYLIPSSYPRGKYLLVFDPLDGSSNIDVNVSIGSIFSILRAPADVVASGRDVTEADFLQPGAAQVAAGYTIYGPTTQLVLTVGNGVAAFTLDPNLGEFLLTRSDIRVPEQTQEFAINSSNSRFWEPPVKRYVDECLAGKTGPRGKDFNMRWVASMVAEAHRILMRGGVFMYPRDTKDPAKPGRLRLLYEANPVAMLMEQAGGRASTGREPILGVSPTALHQRIGLIFGSKDEVERIERYHQEPASNEAAAPLFAERSLFRD</sequence>
<keyword id="KW-0119">Carbohydrate metabolism</keyword>
<keyword id="KW-0963">Cytoplasm</keyword>
<keyword id="KW-0378">Hydrolase</keyword>
<keyword id="KW-0460">Magnesium</keyword>
<keyword id="KW-0479">Metal-binding</keyword>
<keyword id="KW-1185">Reference proteome</keyword>
<proteinExistence type="inferred from homology"/>
<accession>Q1LN82</accession>
<organism>
    <name type="scientific">Cupriavidus metallidurans (strain ATCC 43123 / DSM 2839 / NBRC 102507 / CH34)</name>
    <name type="common">Ralstonia metallidurans</name>
    <dbReference type="NCBI Taxonomy" id="266264"/>
    <lineage>
        <taxon>Bacteria</taxon>
        <taxon>Pseudomonadati</taxon>
        <taxon>Pseudomonadota</taxon>
        <taxon>Betaproteobacteria</taxon>
        <taxon>Burkholderiales</taxon>
        <taxon>Burkholderiaceae</taxon>
        <taxon>Cupriavidus</taxon>
    </lineage>
</organism>
<name>F16A2_CUPMC</name>
<gene>
    <name evidence="1" type="primary">fbp2</name>
    <name type="ordered locus">Rmet_1511</name>
</gene>
<reference key="1">
    <citation type="journal article" date="2010" name="PLoS ONE">
        <title>The complete genome sequence of Cupriavidus metallidurans strain CH34, a master survivalist in harsh and anthropogenic environments.</title>
        <authorList>
            <person name="Janssen P.J."/>
            <person name="Van Houdt R."/>
            <person name="Moors H."/>
            <person name="Monsieurs P."/>
            <person name="Morin N."/>
            <person name="Michaux A."/>
            <person name="Benotmane M.A."/>
            <person name="Leys N."/>
            <person name="Vallaeys T."/>
            <person name="Lapidus A."/>
            <person name="Monchy S."/>
            <person name="Medigue C."/>
            <person name="Taghavi S."/>
            <person name="McCorkle S."/>
            <person name="Dunn J."/>
            <person name="van der Lelie D."/>
            <person name="Mergeay M."/>
        </authorList>
    </citation>
    <scope>NUCLEOTIDE SEQUENCE [LARGE SCALE GENOMIC DNA]</scope>
    <source>
        <strain>ATCC 43123 / DSM 2839 / NBRC 102507 / CH34</strain>
    </source>
</reference>
<dbReference type="EC" id="3.1.3.11" evidence="1"/>
<dbReference type="EMBL" id="CP000352">
    <property type="protein sequence ID" value="ABF08394.1"/>
    <property type="molecule type" value="Genomic_DNA"/>
</dbReference>
<dbReference type="RefSeq" id="WP_011516254.1">
    <property type="nucleotide sequence ID" value="NC_007973.1"/>
</dbReference>
<dbReference type="SMR" id="Q1LN82"/>
<dbReference type="STRING" id="266264.Rmet_1511"/>
<dbReference type="KEGG" id="rme:Rmet_1511"/>
<dbReference type="eggNOG" id="COG0158">
    <property type="taxonomic scope" value="Bacteria"/>
</dbReference>
<dbReference type="HOGENOM" id="CLU_039977_0_0_4"/>
<dbReference type="UniPathway" id="UPA00138"/>
<dbReference type="Proteomes" id="UP000002429">
    <property type="component" value="Chromosome"/>
</dbReference>
<dbReference type="GO" id="GO:0005829">
    <property type="term" value="C:cytosol"/>
    <property type="evidence" value="ECO:0007669"/>
    <property type="project" value="TreeGrafter"/>
</dbReference>
<dbReference type="GO" id="GO:0042132">
    <property type="term" value="F:fructose 1,6-bisphosphate 1-phosphatase activity"/>
    <property type="evidence" value="ECO:0007669"/>
    <property type="project" value="UniProtKB-UniRule"/>
</dbReference>
<dbReference type="GO" id="GO:0000287">
    <property type="term" value="F:magnesium ion binding"/>
    <property type="evidence" value="ECO:0007669"/>
    <property type="project" value="UniProtKB-UniRule"/>
</dbReference>
<dbReference type="GO" id="GO:0030388">
    <property type="term" value="P:fructose 1,6-bisphosphate metabolic process"/>
    <property type="evidence" value="ECO:0007669"/>
    <property type="project" value="TreeGrafter"/>
</dbReference>
<dbReference type="GO" id="GO:0006002">
    <property type="term" value="P:fructose 6-phosphate metabolic process"/>
    <property type="evidence" value="ECO:0007669"/>
    <property type="project" value="TreeGrafter"/>
</dbReference>
<dbReference type="GO" id="GO:0006000">
    <property type="term" value="P:fructose metabolic process"/>
    <property type="evidence" value="ECO:0007669"/>
    <property type="project" value="TreeGrafter"/>
</dbReference>
<dbReference type="GO" id="GO:0006094">
    <property type="term" value="P:gluconeogenesis"/>
    <property type="evidence" value="ECO:0007669"/>
    <property type="project" value="UniProtKB-UniRule"/>
</dbReference>
<dbReference type="GO" id="GO:0005986">
    <property type="term" value="P:sucrose biosynthetic process"/>
    <property type="evidence" value="ECO:0007669"/>
    <property type="project" value="TreeGrafter"/>
</dbReference>
<dbReference type="CDD" id="cd00354">
    <property type="entry name" value="FBPase"/>
    <property type="match status" value="1"/>
</dbReference>
<dbReference type="FunFam" id="3.30.540.10:FF:000002">
    <property type="entry name" value="Fructose-1,6-bisphosphatase class 1"/>
    <property type="match status" value="1"/>
</dbReference>
<dbReference type="FunFam" id="3.40.190.80:FF:000011">
    <property type="entry name" value="Fructose-1,6-bisphosphatase class 1"/>
    <property type="match status" value="1"/>
</dbReference>
<dbReference type="Gene3D" id="3.40.190.80">
    <property type="match status" value="1"/>
</dbReference>
<dbReference type="Gene3D" id="3.30.540.10">
    <property type="entry name" value="Fructose-1,6-Bisphosphatase, subunit A, domain 1"/>
    <property type="match status" value="1"/>
</dbReference>
<dbReference type="HAMAP" id="MF_01855">
    <property type="entry name" value="FBPase_class1"/>
    <property type="match status" value="1"/>
</dbReference>
<dbReference type="InterPro" id="IPR044015">
    <property type="entry name" value="FBPase_C_dom"/>
</dbReference>
<dbReference type="InterPro" id="IPR000146">
    <property type="entry name" value="FBPase_class-1"/>
</dbReference>
<dbReference type="InterPro" id="IPR033391">
    <property type="entry name" value="FBPase_N"/>
</dbReference>
<dbReference type="InterPro" id="IPR028343">
    <property type="entry name" value="FBPtase"/>
</dbReference>
<dbReference type="InterPro" id="IPR020548">
    <property type="entry name" value="Fructose_bisphosphatase_AS"/>
</dbReference>
<dbReference type="NCBIfam" id="NF006779">
    <property type="entry name" value="PRK09293.1-3"/>
    <property type="match status" value="1"/>
</dbReference>
<dbReference type="NCBIfam" id="NF006780">
    <property type="entry name" value="PRK09293.1-4"/>
    <property type="match status" value="1"/>
</dbReference>
<dbReference type="PANTHER" id="PTHR11556">
    <property type="entry name" value="FRUCTOSE-1,6-BISPHOSPHATASE-RELATED"/>
    <property type="match status" value="1"/>
</dbReference>
<dbReference type="PANTHER" id="PTHR11556:SF35">
    <property type="entry name" value="SEDOHEPTULOSE-1,7-BISPHOSPHATASE, CHLOROPLASTIC"/>
    <property type="match status" value="1"/>
</dbReference>
<dbReference type="Pfam" id="PF00316">
    <property type="entry name" value="FBPase"/>
    <property type="match status" value="1"/>
</dbReference>
<dbReference type="Pfam" id="PF18913">
    <property type="entry name" value="FBPase_C"/>
    <property type="match status" value="1"/>
</dbReference>
<dbReference type="PIRSF" id="PIRSF500210">
    <property type="entry name" value="FBPtase"/>
    <property type="match status" value="1"/>
</dbReference>
<dbReference type="PIRSF" id="PIRSF000904">
    <property type="entry name" value="FBPtase_SBPase"/>
    <property type="match status" value="1"/>
</dbReference>
<dbReference type="PRINTS" id="PR00115">
    <property type="entry name" value="F16BPHPHTASE"/>
</dbReference>
<dbReference type="SUPFAM" id="SSF56655">
    <property type="entry name" value="Carbohydrate phosphatase"/>
    <property type="match status" value="1"/>
</dbReference>
<dbReference type="PROSITE" id="PS00124">
    <property type="entry name" value="FBPASE"/>
    <property type="match status" value="1"/>
</dbReference>
<protein>
    <recommendedName>
        <fullName evidence="1">Fructose-1,6-bisphosphatase class 1 2</fullName>
        <shortName evidence="1">FBPase class 1 2</shortName>
        <ecNumber evidence="1">3.1.3.11</ecNumber>
    </recommendedName>
    <alternativeName>
        <fullName evidence="1">D-fructose-1,6-bisphosphate 1-phosphohydrolase class 1 2</fullName>
    </alternativeName>
</protein>
<comment type="catalytic activity">
    <reaction evidence="1">
        <text>beta-D-fructose 1,6-bisphosphate + H2O = beta-D-fructose 6-phosphate + phosphate</text>
        <dbReference type="Rhea" id="RHEA:11064"/>
        <dbReference type="ChEBI" id="CHEBI:15377"/>
        <dbReference type="ChEBI" id="CHEBI:32966"/>
        <dbReference type="ChEBI" id="CHEBI:43474"/>
        <dbReference type="ChEBI" id="CHEBI:57634"/>
        <dbReference type="EC" id="3.1.3.11"/>
    </reaction>
</comment>
<comment type="cofactor">
    <cofactor evidence="1">
        <name>Mg(2+)</name>
        <dbReference type="ChEBI" id="CHEBI:18420"/>
    </cofactor>
    <text evidence="1">Binds 2 magnesium ions per subunit.</text>
</comment>
<comment type="pathway">
    <text evidence="1">Carbohydrate biosynthesis; gluconeogenesis.</text>
</comment>
<comment type="subunit">
    <text evidence="1">Homotetramer.</text>
</comment>
<comment type="subcellular location">
    <subcellularLocation>
        <location evidence="1">Cytoplasm</location>
    </subcellularLocation>
</comment>
<comment type="similarity">
    <text evidence="1">Belongs to the FBPase class 1 family.</text>
</comment>